<sequence length="503" mass="56742">MSSIEGPVRVRFAPSPTGSLHIGGVRTALFNWLCARHYGGQFILRIEDTDEKRFVPGAADDISASLRWVGIDWDEGPDVGGPYGPYVQSERFEQGIYQPFINQLLEAGLAYMSFTTEEELAQMRAAAEAAGIKAFRFRGPERDWPLERQREEAASGKPYTIRLKTPLEGETRFRDLIRGGDEIVVQNNQLQDIVLIKSTGMPVYHFAHLVDDHLMKITHVMRGEEWVPSTPYHVLLYDFFGWPRPVFAHLPAILRQDGRGKLSKRKDDVATQRFRERGYLPETIFNYLALQGWSYDGVTEIMTRDELIARFTLERIQPSPARWNPEKLRDMNGIYIRKLTTEQLAERVLPFMQRAGLIGDPASETERAYLISLIPLIHERLEELQEAPDLLAFFYQDVVPGETYNPADLIPKKHDAAQTVALLRAAHEALSQQTDWTPPALETTLRALCEQLQVKPGPLFGAIRVAITGRSVAPPLFDTLAGVGRERSLSRLAAAIAALENLA</sequence>
<proteinExistence type="inferred from homology"/>
<evidence type="ECO:0000255" key="1">
    <source>
        <dbReference type="HAMAP-Rule" id="MF_00022"/>
    </source>
</evidence>
<organism>
    <name type="scientific">Chloroflexus aurantiacus (strain ATCC 29366 / DSM 635 / J-10-fl)</name>
    <dbReference type="NCBI Taxonomy" id="324602"/>
    <lineage>
        <taxon>Bacteria</taxon>
        <taxon>Bacillati</taxon>
        <taxon>Chloroflexota</taxon>
        <taxon>Chloroflexia</taxon>
        <taxon>Chloroflexales</taxon>
        <taxon>Chloroflexineae</taxon>
        <taxon>Chloroflexaceae</taxon>
        <taxon>Chloroflexus</taxon>
    </lineage>
</organism>
<name>SYE_CHLAA</name>
<comment type="function">
    <text evidence="1">Catalyzes the attachment of glutamate to tRNA(Glu) in a two-step reaction: glutamate is first activated by ATP to form Glu-AMP and then transferred to the acceptor end of tRNA(Glu).</text>
</comment>
<comment type="catalytic activity">
    <reaction evidence="1">
        <text>tRNA(Glu) + L-glutamate + ATP = L-glutamyl-tRNA(Glu) + AMP + diphosphate</text>
        <dbReference type="Rhea" id="RHEA:23540"/>
        <dbReference type="Rhea" id="RHEA-COMP:9663"/>
        <dbReference type="Rhea" id="RHEA-COMP:9680"/>
        <dbReference type="ChEBI" id="CHEBI:29985"/>
        <dbReference type="ChEBI" id="CHEBI:30616"/>
        <dbReference type="ChEBI" id="CHEBI:33019"/>
        <dbReference type="ChEBI" id="CHEBI:78442"/>
        <dbReference type="ChEBI" id="CHEBI:78520"/>
        <dbReference type="ChEBI" id="CHEBI:456215"/>
        <dbReference type="EC" id="6.1.1.17"/>
    </reaction>
</comment>
<comment type="subunit">
    <text evidence="1">Monomer.</text>
</comment>
<comment type="subcellular location">
    <subcellularLocation>
        <location evidence="1">Cytoplasm</location>
    </subcellularLocation>
</comment>
<comment type="similarity">
    <text evidence="1">Belongs to the class-I aminoacyl-tRNA synthetase family. Glutamate--tRNA ligase type 1 subfamily.</text>
</comment>
<feature type="chain" id="PRO_1000074317" description="Glutamate--tRNA ligase">
    <location>
        <begin position="1"/>
        <end position="503"/>
    </location>
</feature>
<feature type="short sequence motif" description="'HIGH' region" evidence="1">
    <location>
        <begin position="14"/>
        <end position="24"/>
    </location>
</feature>
<feature type="short sequence motif" description="'KMSKS' region" evidence="1">
    <location>
        <begin position="261"/>
        <end position="265"/>
    </location>
</feature>
<feature type="binding site" evidence="1">
    <location>
        <position position="264"/>
    </location>
    <ligand>
        <name>ATP</name>
        <dbReference type="ChEBI" id="CHEBI:30616"/>
    </ligand>
</feature>
<reference key="1">
    <citation type="journal article" date="2011" name="BMC Genomics">
        <title>Complete genome sequence of the filamentous anoxygenic phototrophic bacterium Chloroflexus aurantiacus.</title>
        <authorList>
            <person name="Tang K.H."/>
            <person name="Barry K."/>
            <person name="Chertkov O."/>
            <person name="Dalin E."/>
            <person name="Han C.S."/>
            <person name="Hauser L.J."/>
            <person name="Honchak B.M."/>
            <person name="Karbach L.E."/>
            <person name="Land M.L."/>
            <person name="Lapidus A."/>
            <person name="Larimer F.W."/>
            <person name="Mikhailova N."/>
            <person name="Pitluck S."/>
            <person name="Pierson B.K."/>
            <person name="Blankenship R.E."/>
        </authorList>
    </citation>
    <scope>NUCLEOTIDE SEQUENCE [LARGE SCALE GENOMIC DNA]</scope>
    <source>
        <strain>ATCC 29366 / DSM 635 / J-10-fl</strain>
    </source>
</reference>
<gene>
    <name evidence="1" type="primary">gltX</name>
    <name type="ordered locus">Caur_1535</name>
</gene>
<dbReference type="EC" id="6.1.1.17" evidence="1"/>
<dbReference type="EMBL" id="CP000909">
    <property type="protein sequence ID" value="ABY34754.1"/>
    <property type="molecule type" value="Genomic_DNA"/>
</dbReference>
<dbReference type="RefSeq" id="WP_012257408.1">
    <property type="nucleotide sequence ID" value="NC_010175.1"/>
</dbReference>
<dbReference type="RefSeq" id="YP_001635143.1">
    <property type="nucleotide sequence ID" value="NC_010175.1"/>
</dbReference>
<dbReference type="SMR" id="A9WAX3"/>
<dbReference type="FunCoup" id="A9WAX3">
    <property type="interactions" value="510"/>
</dbReference>
<dbReference type="STRING" id="324602.Caur_1535"/>
<dbReference type="EnsemblBacteria" id="ABY34754">
    <property type="protein sequence ID" value="ABY34754"/>
    <property type="gene ID" value="Caur_1535"/>
</dbReference>
<dbReference type="KEGG" id="cau:Caur_1535"/>
<dbReference type="PATRIC" id="fig|324602.8.peg.1745"/>
<dbReference type="eggNOG" id="COG0008">
    <property type="taxonomic scope" value="Bacteria"/>
</dbReference>
<dbReference type="eggNOG" id="COG1384">
    <property type="taxonomic scope" value="Bacteria"/>
</dbReference>
<dbReference type="HOGENOM" id="CLU_015768_6_3_0"/>
<dbReference type="InParanoid" id="A9WAX3"/>
<dbReference type="Proteomes" id="UP000002008">
    <property type="component" value="Chromosome"/>
</dbReference>
<dbReference type="GO" id="GO:0005829">
    <property type="term" value="C:cytosol"/>
    <property type="evidence" value="ECO:0000318"/>
    <property type="project" value="GO_Central"/>
</dbReference>
<dbReference type="GO" id="GO:0005524">
    <property type="term" value="F:ATP binding"/>
    <property type="evidence" value="ECO:0007669"/>
    <property type="project" value="UniProtKB-UniRule"/>
</dbReference>
<dbReference type="GO" id="GO:0004818">
    <property type="term" value="F:glutamate-tRNA ligase activity"/>
    <property type="evidence" value="ECO:0000318"/>
    <property type="project" value="GO_Central"/>
</dbReference>
<dbReference type="GO" id="GO:0000049">
    <property type="term" value="F:tRNA binding"/>
    <property type="evidence" value="ECO:0007669"/>
    <property type="project" value="InterPro"/>
</dbReference>
<dbReference type="GO" id="GO:0008270">
    <property type="term" value="F:zinc ion binding"/>
    <property type="evidence" value="ECO:0007669"/>
    <property type="project" value="InterPro"/>
</dbReference>
<dbReference type="GO" id="GO:0006424">
    <property type="term" value="P:glutamyl-tRNA aminoacylation"/>
    <property type="evidence" value="ECO:0000318"/>
    <property type="project" value="GO_Central"/>
</dbReference>
<dbReference type="CDD" id="cd00808">
    <property type="entry name" value="GluRS_core"/>
    <property type="match status" value="1"/>
</dbReference>
<dbReference type="FunFam" id="1.10.10.350:FF:000002">
    <property type="entry name" value="Glutamate--tRNA ligase"/>
    <property type="match status" value="1"/>
</dbReference>
<dbReference type="FunFam" id="3.40.50.620:FF:000127">
    <property type="entry name" value="Glutamate--tRNA ligase"/>
    <property type="match status" value="1"/>
</dbReference>
<dbReference type="Gene3D" id="1.10.10.350">
    <property type="match status" value="1"/>
</dbReference>
<dbReference type="Gene3D" id="1.10.8.70">
    <property type="entry name" value="Glutamate-tRNA synthetase, class I, anticodon-binding domain 1"/>
    <property type="match status" value="1"/>
</dbReference>
<dbReference type="Gene3D" id="3.40.50.620">
    <property type="entry name" value="HUPs"/>
    <property type="match status" value="1"/>
</dbReference>
<dbReference type="HAMAP" id="MF_00022">
    <property type="entry name" value="Glu_tRNA_synth_type1"/>
    <property type="match status" value="1"/>
</dbReference>
<dbReference type="InterPro" id="IPR045462">
    <property type="entry name" value="aa-tRNA-synth_I_cd-bd"/>
</dbReference>
<dbReference type="InterPro" id="IPR020751">
    <property type="entry name" value="aa-tRNA-synth_I_codon-bd_sub2"/>
</dbReference>
<dbReference type="InterPro" id="IPR001412">
    <property type="entry name" value="aa-tRNA-synth_I_CS"/>
</dbReference>
<dbReference type="InterPro" id="IPR008925">
    <property type="entry name" value="aa_tRNA-synth_I_cd-bd_sf"/>
</dbReference>
<dbReference type="InterPro" id="IPR004527">
    <property type="entry name" value="Glu-tRNA-ligase_bac/mito"/>
</dbReference>
<dbReference type="InterPro" id="IPR020752">
    <property type="entry name" value="Glu-tRNA-synth_I_codon-bd_sub1"/>
</dbReference>
<dbReference type="InterPro" id="IPR000924">
    <property type="entry name" value="Glu/Gln-tRNA-synth"/>
</dbReference>
<dbReference type="InterPro" id="IPR020058">
    <property type="entry name" value="Glu/Gln-tRNA-synth_Ib_cat-dom"/>
</dbReference>
<dbReference type="InterPro" id="IPR049940">
    <property type="entry name" value="GluQ/Sye"/>
</dbReference>
<dbReference type="InterPro" id="IPR033910">
    <property type="entry name" value="GluRS_core"/>
</dbReference>
<dbReference type="InterPro" id="IPR014729">
    <property type="entry name" value="Rossmann-like_a/b/a_fold"/>
</dbReference>
<dbReference type="NCBIfam" id="TIGR00464">
    <property type="entry name" value="gltX_bact"/>
    <property type="match status" value="1"/>
</dbReference>
<dbReference type="PANTHER" id="PTHR43311">
    <property type="entry name" value="GLUTAMATE--TRNA LIGASE"/>
    <property type="match status" value="1"/>
</dbReference>
<dbReference type="PANTHER" id="PTHR43311:SF2">
    <property type="entry name" value="GLUTAMATE--TRNA LIGASE, MITOCHONDRIAL-RELATED"/>
    <property type="match status" value="1"/>
</dbReference>
<dbReference type="Pfam" id="PF19269">
    <property type="entry name" value="Anticodon_2"/>
    <property type="match status" value="1"/>
</dbReference>
<dbReference type="Pfam" id="PF00749">
    <property type="entry name" value="tRNA-synt_1c"/>
    <property type="match status" value="1"/>
</dbReference>
<dbReference type="PRINTS" id="PR00987">
    <property type="entry name" value="TRNASYNTHGLU"/>
</dbReference>
<dbReference type="SUPFAM" id="SSF48163">
    <property type="entry name" value="An anticodon-binding domain of class I aminoacyl-tRNA synthetases"/>
    <property type="match status" value="1"/>
</dbReference>
<dbReference type="SUPFAM" id="SSF52374">
    <property type="entry name" value="Nucleotidylyl transferase"/>
    <property type="match status" value="1"/>
</dbReference>
<dbReference type="PROSITE" id="PS00178">
    <property type="entry name" value="AA_TRNA_LIGASE_I"/>
    <property type="match status" value="1"/>
</dbReference>
<accession>A9WAX3</accession>
<protein>
    <recommendedName>
        <fullName evidence="1">Glutamate--tRNA ligase</fullName>
        <ecNumber evidence="1">6.1.1.17</ecNumber>
    </recommendedName>
    <alternativeName>
        <fullName evidence="1">Glutamyl-tRNA synthetase</fullName>
        <shortName evidence="1">GluRS</shortName>
    </alternativeName>
</protein>
<keyword id="KW-0030">Aminoacyl-tRNA synthetase</keyword>
<keyword id="KW-0067">ATP-binding</keyword>
<keyword id="KW-0963">Cytoplasm</keyword>
<keyword id="KW-0436">Ligase</keyword>
<keyword id="KW-0547">Nucleotide-binding</keyword>
<keyword id="KW-0648">Protein biosynthesis</keyword>
<keyword id="KW-1185">Reference proteome</keyword>